<organism>
    <name type="scientific">Homo sapiens</name>
    <name type="common">Human</name>
    <dbReference type="NCBI Taxonomy" id="9606"/>
    <lineage>
        <taxon>Eukaryota</taxon>
        <taxon>Metazoa</taxon>
        <taxon>Chordata</taxon>
        <taxon>Craniata</taxon>
        <taxon>Vertebrata</taxon>
        <taxon>Euteleostomi</taxon>
        <taxon>Mammalia</taxon>
        <taxon>Eutheria</taxon>
        <taxon>Euarchontoglires</taxon>
        <taxon>Primates</taxon>
        <taxon>Haplorrhini</taxon>
        <taxon>Catarrhini</taxon>
        <taxon>Hominidae</taxon>
        <taxon>Homo</taxon>
    </lineage>
</organism>
<accession>P0DP07</accession>
<name>HV431_HUMAN</name>
<proteinExistence type="evidence at protein level"/>
<keyword id="KW-1064">Adaptive immunity</keyword>
<keyword id="KW-1003">Cell membrane</keyword>
<keyword id="KW-1015">Disulfide bond</keyword>
<keyword id="KW-0391">Immunity</keyword>
<keyword id="KW-1280">Immunoglobulin</keyword>
<keyword id="KW-0393">Immunoglobulin domain</keyword>
<keyword id="KW-0472">Membrane</keyword>
<keyword id="KW-1267">Proteomics identification</keyword>
<keyword id="KW-1185">Reference proteome</keyword>
<keyword id="KW-0964">Secreted</keyword>
<keyword id="KW-0732">Signal</keyword>
<sequence length="118" mass="13095">MKHLWFFLLLVAAPRWVLSQVQLQESGPGLVKPSQTLSLTCTVSGGSISSGGYYWSWIRQHPGKGLEWIGYIYYSGSTYYNPSLKSLVTISVDTSKNQFSLKLSSVTAADTAVYYCAR</sequence>
<dbReference type="EMBL" id="KC162925">
    <property type="protein sequence ID" value="AGE91701.1"/>
    <property type="molecule type" value="Genomic_DNA"/>
</dbReference>
<dbReference type="SMR" id="P0DP07"/>
<dbReference type="FunCoup" id="P0DP07">
    <property type="interactions" value="354"/>
</dbReference>
<dbReference type="IntAct" id="P0DP07">
    <property type="interactions" value="5"/>
</dbReference>
<dbReference type="IMGT_GENE-DB" id="IGHV4-31"/>
<dbReference type="BioMuta" id="IGHV4-31"/>
<dbReference type="jPOST" id="P0DP07"/>
<dbReference type="MassIVE" id="P0DP07"/>
<dbReference type="AGR" id="HGNC:5649"/>
<dbReference type="GeneCards" id="IGHV4-31"/>
<dbReference type="HGNC" id="HGNC:5649">
    <property type="gene designation" value="IGHV4-31"/>
</dbReference>
<dbReference type="neXtProt" id="NX_P0DP07"/>
<dbReference type="InParanoid" id="P0DP07"/>
<dbReference type="OrthoDB" id="9945861at2759"/>
<dbReference type="PAN-GO" id="P0DP07">
    <property type="GO annotations" value="11 GO annotations based on evolutionary models"/>
</dbReference>
<dbReference type="ChiTaRS" id="IGHV4-31">
    <property type="organism name" value="human"/>
</dbReference>
<dbReference type="Pharos" id="P0DP07">
    <property type="development level" value="Tdark"/>
</dbReference>
<dbReference type="PRO" id="PR:P0DP07"/>
<dbReference type="Proteomes" id="UP000005640">
    <property type="component" value="Unplaced"/>
</dbReference>
<dbReference type="RNAct" id="P0DP07">
    <property type="molecule type" value="protein"/>
</dbReference>
<dbReference type="GO" id="GO:0005576">
    <property type="term" value="C:extracellular region"/>
    <property type="evidence" value="ECO:0007669"/>
    <property type="project" value="UniProtKB-SubCell"/>
</dbReference>
<dbReference type="GO" id="GO:0019814">
    <property type="term" value="C:immunoglobulin complex"/>
    <property type="evidence" value="ECO:0007669"/>
    <property type="project" value="UniProtKB-KW"/>
</dbReference>
<dbReference type="GO" id="GO:0005886">
    <property type="term" value="C:plasma membrane"/>
    <property type="evidence" value="ECO:0007669"/>
    <property type="project" value="UniProtKB-SubCell"/>
</dbReference>
<dbReference type="GO" id="GO:0003823">
    <property type="term" value="F:antigen binding"/>
    <property type="evidence" value="ECO:0000318"/>
    <property type="project" value="GO_Central"/>
</dbReference>
<dbReference type="GO" id="GO:0016064">
    <property type="term" value="P:immunoglobulin mediated immune response"/>
    <property type="evidence" value="ECO:0000318"/>
    <property type="project" value="GO_Central"/>
</dbReference>
<dbReference type="FunFam" id="2.60.40.10:FF:001119">
    <property type="entry name" value="Immunoglobulin heavy variable 4-30-4"/>
    <property type="match status" value="1"/>
</dbReference>
<dbReference type="Gene3D" id="2.60.40.10">
    <property type="entry name" value="Immunoglobulins"/>
    <property type="match status" value="1"/>
</dbReference>
<dbReference type="InterPro" id="IPR007110">
    <property type="entry name" value="Ig-like_dom"/>
</dbReference>
<dbReference type="InterPro" id="IPR036179">
    <property type="entry name" value="Ig-like_dom_sf"/>
</dbReference>
<dbReference type="InterPro" id="IPR013783">
    <property type="entry name" value="Ig-like_fold"/>
</dbReference>
<dbReference type="InterPro" id="IPR013106">
    <property type="entry name" value="Ig_V-set"/>
</dbReference>
<dbReference type="InterPro" id="IPR050199">
    <property type="entry name" value="IgHV"/>
</dbReference>
<dbReference type="PANTHER" id="PTHR23266">
    <property type="entry name" value="IMMUNOGLOBULIN HEAVY CHAIN"/>
    <property type="match status" value="1"/>
</dbReference>
<dbReference type="Pfam" id="PF07686">
    <property type="entry name" value="V-set"/>
    <property type="match status" value="1"/>
</dbReference>
<dbReference type="SMART" id="SM00406">
    <property type="entry name" value="IGv"/>
    <property type="match status" value="1"/>
</dbReference>
<dbReference type="SUPFAM" id="SSF48726">
    <property type="entry name" value="Immunoglobulin"/>
    <property type="match status" value="1"/>
</dbReference>
<dbReference type="PROSITE" id="PS50835">
    <property type="entry name" value="IG_LIKE"/>
    <property type="match status" value="1"/>
</dbReference>
<feature type="signal peptide" evidence="2">
    <location>
        <begin position="1"/>
        <end position="19"/>
    </location>
</feature>
<feature type="chain" id="PRO_0000439562" description="Immunoglobulin heavy variable 4-31" evidence="2">
    <location>
        <begin position="20"/>
        <end position="118"/>
    </location>
</feature>
<feature type="domain" description="Ig-like" evidence="3">
    <location>
        <begin position="20"/>
        <end position="118" status="greater than"/>
    </location>
</feature>
<feature type="region of interest" description="Framework-1" evidence="1">
    <location>
        <begin position="20"/>
        <end position="44"/>
    </location>
</feature>
<feature type="region of interest" description="Complementarity-determining-1" evidence="1">
    <location>
        <begin position="45"/>
        <end position="54"/>
    </location>
</feature>
<feature type="region of interest" description="Framework-2" evidence="1">
    <location>
        <begin position="55"/>
        <end position="71"/>
    </location>
</feature>
<feature type="region of interest" description="Complementarity-determining-2" evidence="1">
    <location>
        <begin position="72"/>
        <end position="78"/>
    </location>
</feature>
<feature type="region of interest" description="Framework-3" evidence="1">
    <location>
        <begin position="79"/>
        <end position="116"/>
    </location>
</feature>
<feature type="region of interest" description="Complementarity-determining-3" evidence="1">
    <location>
        <begin position="117"/>
        <end position="118" status="greater than"/>
    </location>
</feature>
<feature type="disulfide bond" evidence="3">
    <location>
        <begin position="41"/>
        <end position="116"/>
    </location>
</feature>
<feature type="non-terminal residue">
    <location>
        <position position="118"/>
    </location>
</feature>
<comment type="function">
    <text evidence="5 6 7 8">V region of the variable domain of immunoglobulin heavy chains that participates in the antigen recognition (PubMed:24600447). Immunoglobulins, also known as antibodies, are membrane-bound or secreted glycoproteins produced by B lymphocytes. In the recognition phase of humoral immunity, the membrane-bound immunoglobulins serve as receptors which, upon binding of a specific antigen, trigger the clonal expansion and differentiation of B lymphocytes into immunoglobulins-secreting plasma cells. Secreted immunoglobulins mediate the effector phase of humoral immunity, which results in the elimination of bound antigens (PubMed:20176268, PubMed:22158414). The antigen binding site is formed by the variable domain of one heavy chain, together with that of its associated light chain. Thus, each immunoglobulin has two antigen binding sites with remarkable affinity for a particular antigen. The variable domains are assembled by a process called V-(D)-J rearrangement and can then be subjected to somatic hypermutations which, after exposure to antigen and selection, allow affinity maturation for a particular antigen (PubMed:17576170, PubMed:20176268).</text>
</comment>
<comment type="subunit">
    <text evidence="6">Immunoglobulins are composed of two identical heavy chains and two identical light chains; disulfide-linked.</text>
</comment>
<comment type="subcellular location">
    <subcellularLocation>
        <location evidence="6 7">Secreted</location>
    </subcellularLocation>
    <subcellularLocation>
        <location evidence="6 7">Cell membrane</location>
    </subcellularLocation>
</comment>
<comment type="polymorphism">
    <text evidence="10">There are several alleles. The sequence shown is that of IMGT allele IGHV4-31*03.</text>
</comment>
<comment type="caution">
    <text evidence="10">For examples of full-length immunoglobulin heavy chains (of different isotypes) see AC P0DOX2, AC P0DOX3, AC P0DOX4, AC P0DOX5 and AC P0DOX6.</text>
</comment>
<comment type="caution">
    <text evidence="11">Watson et al. identified this gene on chromosome 14. However, it is not currently present on the reference genome assembly (GRCh38/hg38).</text>
</comment>
<evidence type="ECO:0000250" key="1">
    <source>
        <dbReference type="UniProtKB" id="P23083"/>
    </source>
</evidence>
<evidence type="ECO:0000255" key="2"/>
<evidence type="ECO:0000255" key="3">
    <source>
        <dbReference type="PROSITE-ProRule" id="PRU00114"/>
    </source>
</evidence>
<evidence type="ECO:0000303" key="4">
    <source>
    </source>
</evidence>
<evidence type="ECO:0000303" key="5">
    <source>
    </source>
</evidence>
<evidence type="ECO:0000303" key="6">
    <source>
    </source>
</evidence>
<evidence type="ECO:0000303" key="7">
    <source>
    </source>
</evidence>
<evidence type="ECO:0000303" key="8">
    <source>
    </source>
</evidence>
<evidence type="ECO:0000303" key="9">
    <source ref="3"/>
</evidence>
<evidence type="ECO:0000305" key="10"/>
<evidence type="ECO:0000305" key="11">
    <source>
    </source>
</evidence>
<reference key="1">
    <citation type="journal article" date="2013" name="Am. J. Hum. Genet.">
        <title>Complete haplotype sequence of the human immunoglobulin heavy-chain variable, diversity, and joining genes and characterization of allelic and copy-number variation.</title>
        <authorList>
            <person name="Watson C.T."/>
            <person name="Steinberg K.M."/>
            <person name="Huddleston J."/>
            <person name="Warren R.L."/>
            <person name="Malig M."/>
            <person name="Schein J."/>
            <person name="Willsey A.J."/>
            <person name="Joy J.B."/>
            <person name="Scott J.K."/>
            <person name="Graves T.A."/>
            <person name="Wilson R.K."/>
            <person name="Holt R.A."/>
            <person name="Eichler E.E."/>
            <person name="Breden F."/>
        </authorList>
    </citation>
    <scope>NUCLEOTIDE SEQUENCE [GENOMIC DNA] (IMGT ALLELE IGHV4-31*03)</scope>
</reference>
<reference key="2">
    <citation type="journal article" date="2001" name="Exp. Clin. Immunogenet.">
        <title>Nomenclature of the human immunoglobulin heavy (IGH) genes.</title>
        <authorList>
            <person name="Lefranc M.P."/>
        </authorList>
    </citation>
    <scope>NOMENCLATURE</scope>
</reference>
<reference key="3">
    <citation type="book" date="2001" name="The Immunoglobulin FactsBook.">
        <title>The Immunoglobulin FactsBook.</title>
        <editorList>
            <person name="Lefranc M.P."/>
            <person name="Lefranc G."/>
        </editorList>
        <authorList>
            <person name="Lefranc M.P."/>
            <person name="Lefranc G."/>
        </authorList>
    </citation>
    <scope>NOMENCLATURE</scope>
</reference>
<reference key="4">
    <citation type="journal article" date="2007" name="Annu. Rev. Genet.">
        <title>Immunoglobulin somatic hypermutation.</title>
        <authorList>
            <person name="Teng G."/>
            <person name="Papavasiliou F.N."/>
        </authorList>
    </citation>
    <scope>REVIEW ON SOMATIC HYPERMUTATION</scope>
</reference>
<reference key="5">
    <citation type="journal article" date="2010" name="J. Allergy Clin. Immunol.">
        <title>Structure and function of immunoglobulins.</title>
        <authorList>
            <person name="Schroeder H.W. Jr."/>
            <person name="Cavacini L."/>
        </authorList>
    </citation>
    <scope>REVIEW ON IMMUNOGLOBULINS</scope>
</reference>
<reference key="6">
    <citation type="journal article" date="2012" name="Nat. Rev. Immunol.">
        <title>Molecular programming of B cell memory.</title>
        <authorList>
            <person name="McHeyzer-Williams M."/>
            <person name="Okitsu S."/>
            <person name="Wang N."/>
            <person name="McHeyzer-Williams L."/>
        </authorList>
    </citation>
    <scope>REVIEW ON FUNCTION</scope>
</reference>
<reference key="7">
    <citation type="journal article" date="2014" name="Front. Immunol.">
        <title>Immunoglobulin and T Cell Receptor Genes: IMGT((R)) and the Birth and Rise of Immunoinformatics.</title>
        <authorList>
            <person name="Lefranc M.P."/>
        </authorList>
    </citation>
    <scope>NOMENCLATURE</scope>
</reference>
<gene>
    <name evidence="4 9" type="primary">IGHV4-31</name>
</gene>
<protein>
    <recommendedName>
        <fullName evidence="4 9">Immunoglobulin heavy variable 4-31</fullName>
    </recommendedName>
</protein>